<accession>Q5L115</accession>
<gene>
    <name evidence="1" type="primary">ctaA</name>
    <name type="ordered locus">GK1080</name>
</gene>
<reference key="1">
    <citation type="journal article" date="2004" name="Nucleic Acids Res.">
        <title>Thermoadaptation trait revealed by the genome sequence of thermophilic Geobacillus kaustophilus.</title>
        <authorList>
            <person name="Takami H."/>
            <person name="Takaki Y."/>
            <person name="Chee G.-J."/>
            <person name="Nishi S."/>
            <person name="Shimamura S."/>
            <person name="Suzuki H."/>
            <person name="Matsui S."/>
            <person name="Uchiyama I."/>
        </authorList>
    </citation>
    <scope>NUCLEOTIDE SEQUENCE [LARGE SCALE GENOMIC DNA]</scope>
    <source>
        <strain>HTA426</strain>
    </source>
</reference>
<sequence length="317" mass="34721">MQRSLKWFASATTLAMLFVLIGGALVTKTGSGMGCGRSWPLCNGQWVPDHITPELIIELSHRLVSGLAGIMVLILSIWAWRAIGHVQETKFLAVISFVFLVLQGLIGAAAVVWGQSDFVLALHFGISLISFAAVLLLTLLIFEIDKTFSAASLSLDGKMRFHIYGITIYSYIVVYTGALVRHTNASLACPSWPLCAKTRLLPVQFHEWVQMGHRLAAAVIIIWIAAAAIHAVRHYRRQPVIYYGWLIALLLVLAQMTTGALVVFTQLNLYIALAHAFFISCLFGVLSYLLLLALRTRRAPVKAADHSAGEAAPATLK</sequence>
<evidence type="ECO:0000255" key="1">
    <source>
        <dbReference type="HAMAP-Rule" id="MF_01664"/>
    </source>
</evidence>
<comment type="function">
    <text evidence="1">Catalyzes the conversion of heme O to heme A by two successive hydroxylations of the methyl group at C8. The first hydroxylation forms heme I, the second hydroxylation results in an unstable dihydroxymethyl group, which spontaneously dehydrates, resulting in the formyl group of heme A.</text>
</comment>
<comment type="catalytic activity">
    <reaction evidence="1">
        <text>Fe(II)-heme o + 2 A + H2O = Fe(II)-heme a + 2 AH2</text>
        <dbReference type="Rhea" id="RHEA:63388"/>
        <dbReference type="ChEBI" id="CHEBI:13193"/>
        <dbReference type="ChEBI" id="CHEBI:15377"/>
        <dbReference type="ChEBI" id="CHEBI:17499"/>
        <dbReference type="ChEBI" id="CHEBI:60530"/>
        <dbReference type="ChEBI" id="CHEBI:61715"/>
        <dbReference type="EC" id="1.17.99.9"/>
    </reaction>
    <physiologicalReaction direction="left-to-right" evidence="1">
        <dbReference type="Rhea" id="RHEA:63389"/>
    </physiologicalReaction>
</comment>
<comment type="cofactor">
    <cofactor evidence="1">
        <name>heme b</name>
        <dbReference type="ChEBI" id="CHEBI:60344"/>
    </cofactor>
</comment>
<comment type="pathway">
    <text evidence="1">Porphyrin-containing compound metabolism; heme A biosynthesis; heme A from heme O: step 1/1.</text>
</comment>
<comment type="subunit">
    <text evidence="1">Interacts with CtaB.</text>
</comment>
<comment type="subcellular location">
    <subcellularLocation>
        <location evidence="1">Cell membrane</location>
        <topology evidence="1">Multi-pass membrane protein</topology>
    </subcellularLocation>
</comment>
<comment type="domain">
    <text evidence="1">The N-half (TM1-TM4) and C-half (TM5-TM8) domains are connected by an intracellular loop. Each domain is formed from four-helix bundles and they align in a pseudo twofold symmetry manner. The N-half domain is the substrate-heme O binding domain and the C-half domain is the cofactor heme B binding domain.</text>
</comment>
<comment type="domain">
    <text evidence="1">The cysteines of disulfide bond Cys-35 and Cys-42 may be involved in transfer of reducing equivalents from quinol in the membrane to the active site of the enzyme.</text>
</comment>
<comment type="similarity">
    <text evidence="1">Belongs to the COX15/CtaA family. Type 1 subfamily.</text>
</comment>
<name>CTAA_GEOKA</name>
<protein>
    <recommendedName>
        <fullName evidence="1">Heme A synthase</fullName>
        <shortName evidence="1">HAS</shortName>
        <ecNumber evidence="1">1.17.99.9</ecNumber>
    </recommendedName>
    <alternativeName>
        <fullName evidence="1">Cytochrome aa3-controlling protein</fullName>
    </alternativeName>
</protein>
<feature type="chain" id="PRO_0000348979" description="Heme A synthase">
    <location>
        <begin position="1"/>
        <end position="317"/>
    </location>
</feature>
<feature type="topological domain" description="Cytoplasmic" evidence="1">
    <location>
        <begin position="1"/>
        <end position="6"/>
    </location>
</feature>
<feature type="transmembrane region" description="Helical" evidence="1">
    <location>
        <begin position="7"/>
        <end position="27"/>
    </location>
</feature>
<feature type="topological domain" description="Extracellular" evidence="1">
    <location>
        <begin position="28"/>
        <end position="62"/>
    </location>
</feature>
<feature type="transmembrane region" description="Helical" evidence="1">
    <location>
        <begin position="63"/>
        <end position="83"/>
    </location>
</feature>
<feature type="topological domain" description="Cytoplasmic" evidence="1">
    <location>
        <begin position="84"/>
        <end position="90"/>
    </location>
</feature>
<feature type="transmembrane region" description="Helical" evidence="1">
    <location>
        <begin position="91"/>
        <end position="111"/>
    </location>
</feature>
<feature type="topological domain" description="Extracellular" evidence="1">
    <location>
        <begin position="112"/>
        <end position="121"/>
    </location>
</feature>
<feature type="transmembrane region" description="Helical" evidence="1">
    <location>
        <begin position="122"/>
        <end position="142"/>
    </location>
</feature>
<feature type="topological domain" description="Cytoplasmic" evidence="1">
    <location>
        <begin position="143"/>
        <end position="159"/>
    </location>
</feature>
<feature type="transmembrane region" description="Helical" evidence="1">
    <location>
        <begin position="160"/>
        <end position="180"/>
    </location>
</feature>
<feature type="topological domain" description="Extracellular" evidence="1">
    <location>
        <begin position="181"/>
        <end position="211"/>
    </location>
</feature>
<feature type="transmembrane region" description="Helical" evidence="1">
    <location>
        <begin position="212"/>
        <end position="232"/>
    </location>
</feature>
<feature type="topological domain" description="Cytoplasmic" evidence="1">
    <location>
        <begin position="233"/>
        <end position="243"/>
    </location>
</feature>
<feature type="transmembrane region" description="Helical" evidence="1">
    <location>
        <begin position="244"/>
        <end position="264"/>
    </location>
</feature>
<feature type="topological domain" description="Extracellular" evidence="1">
    <location>
        <begin position="265"/>
        <end position="270"/>
    </location>
</feature>
<feature type="transmembrane region" description="Helical" evidence="1">
    <location>
        <begin position="271"/>
        <end position="291"/>
    </location>
</feature>
<feature type="topological domain" description="Cytoplasmic" evidence="1">
    <location>
        <begin position="292"/>
        <end position="317"/>
    </location>
</feature>
<feature type="active site" evidence="1">
    <location>
        <position position="58"/>
    </location>
</feature>
<feature type="binding site" description="axial binding residue" evidence="1">
    <location>
        <position position="61"/>
    </location>
    <ligand>
        <name>heme o</name>
        <dbReference type="ChEBI" id="CHEBI:24480"/>
    </ligand>
    <ligandPart>
        <name>Fe</name>
        <dbReference type="ChEBI" id="CHEBI:18248"/>
    </ligandPart>
</feature>
<feature type="binding site" description="axial binding residue" evidence="1">
    <location>
        <position position="123"/>
    </location>
    <ligand>
        <name>heme o</name>
        <dbReference type="ChEBI" id="CHEBI:24480"/>
    </ligand>
    <ligandPart>
        <name>Fe</name>
        <dbReference type="ChEBI" id="CHEBI:18248"/>
    </ligandPart>
</feature>
<feature type="binding site" description="axial binding residue" evidence="1">
    <location>
        <position position="213"/>
    </location>
    <ligand>
        <name>heme b</name>
        <dbReference type="ChEBI" id="CHEBI:60344"/>
    </ligand>
    <ligandPart>
        <name>Fe</name>
        <dbReference type="ChEBI" id="CHEBI:18248"/>
    </ligandPart>
</feature>
<feature type="binding site" description="axial binding residue" evidence="1">
    <location>
        <position position="275"/>
    </location>
    <ligand>
        <name>heme b</name>
        <dbReference type="ChEBI" id="CHEBI:60344"/>
    </ligand>
    <ligandPart>
        <name>Fe</name>
        <dbReference type="ChEBI" id="CHEBI:18248"/>
    </ligandPart>
</feature>
<feature type="disulfide bond" description="Essential for catalytic activity" evidence="1">
    <location>
        <begin position="35"/>
        <end position="42"/>
    </location>
</feature>
<feature type="disulfide bond" evidence="1">
    <location>
        <begin position="189"/>
        <end position="195"/>
    </location>
</feature>
<proteinExistence type="inferred from homology"/>
<organism>
    <name type="scientific">Geobacillus kaustophilus (strain HTA426)</name>
    <dbReference type="NCBI Taxonomy" id="235909"/>
    <lineage>
        <taxon>Bacteria</taxon>
        <taxon>Bacillati</taxon>
        <taxon>Bacillota</taxon>
        <taxon>Bacilli</taxon>
        <taxon>Bacillales</taxon>
        <taxon>Anoxybacillaceae</taxon>
        <taxon>Geobacillus</taxon>
        <taxon>Geobacillus thermoleovorans group</taxon>
    </lineage>
</organism>
<dbReference type="EC" id="1.17.99.9" evidence="1"/>
<dbReference type="EMBL" id="BA000043">
    <property type="protein sequence ID" value="BAD75365.1"/>
    <property type="molecule type" value="Genomic_DNA"/>
</dbReference>
<dbReference type="SMR" id="Q5L115"/>
<dbReference type="STRING" id="235909.GK1080"/>
<dbReference type="KEGG" id="gka:GK1080"/>
<dbReference type="eggNOG" id="COG1612">
    <property type="taxonomic scope" value="Bacteria"/>
</dbReference>
<dbReference type="HOGENOM" id="CLU_041525_3_1_9"/>
<dbReference type="UniPathway" id="UPA00269">
    <property type="reaction ID" value="UER00713"/>
</dbReference>
<dbReference type="Proteomes" id="UP000001172">
    <property type="component" value="Chromosome"/>
</dbReference>
<dbReference type="GO" id="GO:0005886">
    <property type="term" value="C:plasma membrane"/>
    <property type="evidence" value="ECO:0007669"/>
    <property type="project" value="UniProtKB-SubCell"/>
</dbReference>
<dbReference type="GO" id="GO:0046872">
    <property type="term" value="F:metal ion binding"/>
    <property type="evidence" value="ECO:0007669"/>
    <property type="project" value="UniProtKB-KW"/>
</dbReference>
<dbReference type="GO" id="GO:0016653">
    <property type="term" value="F:oxidoreductase activity, acting on NAD(P)H, heme protein as acceptor"/>
    <property type="evidence" value="ECO:0007669"/>
    <property type="project" value="InterPro"/>
</dbReference>
<dbReference type="GO" id="GO:0006784">
    <property type="term" value="P:heme A biosynthetic process"/>
    <property type="evidence" value="ECO:0007669"/>
    <property type="project" value="UniProtKB-UniRule"/>
</dbReference>
<dbReference type="HAMAP" id="MF_01664">
    <property type="entry name" value="HemeA_synth_type1"/>
    <property type="match status" value="1"/>
</dbReference>
<dbReference type="InterPro" id="IPR003780">
    <property type="entry name" value="COX15/CtaA_fam"/>
</dbReference>
<dbReference type="InterPro" id="IPR050450">
    <property type="entry name" value="COX15/CtaA_HemeA_synthase"/>
</dbReference>
<dbReference type="InterPro" id="IPR023755">
    <property type="entry name" value="HemeA_Synthase_type1"/>
</dbReference>
<dbReference type="PANTHER" id="PTHR35457">
    <property type="entry name" value="HEME A SYNTHASE"/>
    <property type="match status" value="1"/>
</dbReference>
<dbReference type="PANTHER" id="PTHR35457:SF1">
    <property type="entry name" value="HEME A SYNTHASE"/>
    <property type="match status" value="1"/>
</dbReference>
<dbReference type="Pfam" id="PF02628">
    <property type="entry name" value="COX15-CtaA"/>
    <property type="match status" value="1"/>
</dbReference>
<keyword id="KW-1003">Cell membrane</keyword>
<keyword id="KW-1015">Disulfide bond</keyword>
<keyword id="KW-0350">Heme biosynthesis</keyword>
<keyword id="KW-0408">Iron</keyword>
<keyword id="KW-0472">Membrane</keyword>
<keyword id="KW-0479">Metal-binding</keyword>
<keyword id="KW-0560">Oxidoreductase</keyword>
<keyword id="KW-1185">Reference proteome</keyword>
<keyword id="KW-0812">Transmembrane</keyword>
<keyword id="KW-1133">Transmembrane helix</keyword>